<keyword id="KW-0002">3D-structure</keyword>
<keyword id="KW-0446">Lipid-binding</keyword>
<keyword id="KW-1267">Proteomics identification</keyword>
<keyword id="KW-1185">Reference proteome</keyword>
<name>ACBD7_HUMAN</name>
<organism>
    <name type="scientific">Homo sapiens</name>
    <name type="common">Human</name>
    <dbReference type="NCBI Taxonomy" id="9606"/>
    <lineage>
        <taxon>Eukaryota</taxon>
        <taxon>Metazoa</taxon>
        <taxon>Chordata</taxon>
        <taxon>Craniata</taxon>
        <taxon>Vertebrata</taxon>
        <taxon>Euteleostomi</taxon>
        <taxon>Mammalia</taxon>
        <taxon>Eutheria</taxon>
        <taxon>Euarchontoglires</taxon>
        <taxon>Primates</taxon>
        <taxon>Haplorrhini</taxon>
        <taxon>Catarrhini</taxon>
        <taxon>Hominidae</taxon>
        <taxon>Homo</taxon>
    </lineage>
</organism>
<sequence>MALQADFDRAAEDVRKLKARPDDGELKELYGLYKQAIVGDINIACPGMLDLKGKAKWEAWNLKKGLSTEDATSAYISKAKELIEKYGI</sequence>
<comment type="function">
    <text>Binds medium- and long-chain acyl-CoA esters.</text>
</comment>
<comment type="interaction">
    <interactant intactId="EBI-18657673">
        <id>Q8N6N7</id>
    </interactant>
    <interactant intactId="EBI-6165891">
        <id>Q14696</id>
        <label>MESD</label>
    </interactant>
    <organismsDiffer>false</organismsDiffer>
    <experiments>3</experiments>
</comment>
<comment type="interaction">
    <interactant intactId="EBI-18657673">
        <id>Q8N6N7</id>
    </interactant>
    <interactant intactId="EBI-11139477">
        <id>Q96N21</id>
        <label>TEPSIN</label>
    </interactant>
    <organismsDiffer>false</organismsDiffer>
    <experiments>3</experiments>
</comment>
<comment type="similarity">
    <text evidence="2">Belongs to the ACBD7 family.</text>
</comment>
<feature type="chain" id="PRO_0000247588" description="Acyl-CoA-binding domain-containing protein 7">
    <location>
        <begin position="1"/>
        <end position="88"/>
    </location>
</feature>
<feature type="domain" description="ACB" evidence="1">
    <location>
        <begin position="3"/>
        <end position="88"/>
    </location>
</feature>
<feature type="binding site">
    <location>
        <position position="15"/>
    </location>
    <ligand>
        <name>an acyl-CoA</name>
        <dbReference type="ChEBI" id="CHEBI:58342"/>
    </ligand>
</feature>
<feature type="binding site">
    <location>
        <begin position="30"/>
        <end position="34"/>
    </location>
    <ligand>
        <name>an acyl-CoA</name>
        <dbReference type="ChEBI" id="CHEBI:58342"/>
    </ligand>
</feature>
<feature type="binding site">
    <location>
        <position position="56"/>
    </location>
    <ligand>
        <name>an acyl-CoA</name>
        <dbReference type="ChEBI" id="CHEBI:58342"/>
    </ligand>
</feature>
<feature type="binding site">
    <location>
        <position position="75"/>
    </location>
    <ligand>
        <name>an acyl-CoA</name>
        <dbReference type="ChEBI" id="CHEBI:58342"/>
    </ligand>
</feature>
<feature type="helix" evidence="3">
    <location>
        <begin position="2"/>
        <end position="13"/>
    </location>
</feature>
<feature type="helix" evidence="3">
    <location>
        <begin position="14"/>
        <end position="16"/>
    </location>
</feature>
<feature type="helix" evidence="3">
    <location>
        <begin position="23"/>
        <end position="37"/>
    </location>
</feature>
<feature type="turn" evidence="3">
    <location>
        <begin position="46"/>
        <end position="49"/>
    </location>
</feature>
<feature type="helix" evidence="3">
    <location>
        <begin position="51"/>
        <end position="61"/>
    </location>
</feature>
<feature type="turn" evidence="3">
    <location>
        <begin position="62"/>
        <end position="65"/>
    </location>
</feature>
<feature type="helix" evidence="3">
    <location>
        <begin position="68"/>
        <end position="86"/>
    </location>
</feature>
<proteinExistence type="evidence at protein level"/>
<gene>
    <name type="primary">ACBD7</name>
</gene>
<accession>Q8N6N7</accession>
<accession>A6NCI2</accession>
<accession>B3KTG8</accession>
<dbReference type="EMBL" id="AK095538">
    <property type="protein sequence ID" value="BAG53080.1"/>
    <property type="molecule type" value="mRNA"/>
</dbReference>
<dbReference type="EMBL" id="AL590365">
    <property type="status" value="NOT_ANNOTATED_CDS"/>
    <property type="molecule type" value="Genomic_DNA"/>
</dbReference>
<dbReference type="EMBL" id="CH471072">
    <property type="protein sequence ID" value="EAW86243.1"/>
    <property type="molecule type" value="Genomic_DNA"/>
</dbReference>
<dbReference type="EMBL" id="BC029526">
    <property type="protein sequence ID" value="AAH29526.1"/>
    <property type="molecule type" value="mRNA"/>
</dbReference>
<dbReference type="CCDS" id="CCDS31153.1"/>
<dbReference type="RefSeq" id="NP_001034933.1">
    <property type="nucleotide sequence ID" value="NM_001039844.3"/>
</dbReference>
<dbReference type="PDB" id="3EPY">
    <property type="method" value="X-ray"/>
    <property type="resolution" value="2.00 A"/>
    <property type="chains" value="A/B=1-88"/>
</dbReference>
<dbReference type="PDBsum" id="3EPY"/>
<dbReference type="SMR" id="Q8N6N7"/>
<dbReference type="BioGRID" id="135940">
    <property type="interactions" value="14"/>
</dbReference>
<dbReference type="FunCoup" id="Q8N6N7">
    <property type="interactions" value="248"/>
</dbReference>
<dbReference type="IntAct" id="Q8N6N7">
    <property type="interactions" value="13"/>
</dbReference>
<dbReference type="STRING" id="9606.ENSP00000367453"/>
<dbReference type="GlyGen" id="Q8N6N7">
    <property type="glycosylation" value="1 site, 1 O-linked glycan (1 site)"/>
</dbReference>
<dbReference type="iPTMnet" id="Q8N6N7"/>
<dbReference type="PhosphoSitePlus" id="Q8N6N7"/>
<dbReference type="BioMuta" id="ACBD7"/>
<dbReference type="DMDM" id="74751066"/>
<dbReference type="jPOST" id="Q8N6N7"/>
<dbReference type="MassIVE" id="Q8N6N7"/>
<dbReference type="PaxDb" id="9606-ENSP00000367453"/>
<dbReference type="PeptideAtlas" id="Q8N6N7"/>
<dbReference type="ProteomicsDB" id="72208"/>
<dbReference type="Pumba" id="Q8N6N7"/>
<dbReference type="Antibodypedia" id="44133">
    <property type="antibodies" value="148 antibodies from 19 providers"/>
</dbReference>
<dbReference type="DNASU" id="414149"/>
<dbReference type="Ensembl" id="ENST00000356189.6">
    <property type="protein sequence ID" value="ENSP00000367453.4"/>
    <property type="gene ID" value="ENSG00000176244.7"/>
</dbReference>
<dbReference type="GeneID" id="414149"/>
<dbReference type="KEGG" id="hsa:414149"/>
<dbReference type="MANE-Select" id="ENST00000356189.6">
    <property type="protein sequence ID" value="ENSP00000367453.4"/>
    <property type="RefSeq nucleotide sequence ID" value="NM_001039844.3"/>
    <property type="RefSeq protein sequence ID" value="NP_001034933.1"/>
</dbReference>
<dbReference type="UCSC" id="uc001inv.4">
    <property type="organism name" value="human"/>
</dbReference>
<dbReference type="AGR" id="HGNC:17715"/>
<dbReference type="CTD" id="414149"/>
<dbReference type="GeneCards" id="ACBD7"/>
<dbReference type="HGNC" id="HGNC:17715">
    <property type="gene designation" value="ACBD7"/>
</dbReference>
<dbReference type="HPA" id="ENSG00000176244">
    <property type="expression patterns" value="Tissue enriched (brain)"/>
</dbReference>
<dbReference type="neXtProt" id="NX_Q8N6N7"/>
<dbReference type="OpenTargets" id="ENSG00000176244"/>
<dbReference type="PharmGKB" id="PA134884059"/>
<dbReference type="VEuPathDB" id="HostDB:ENSG00000176244"/>
<dbReference type="eggNOG" id="KOG0817">
    <property type="taxonomic scope" value="Eukaryota"/>
</dbReference>
<dbReference type="GeneTree" id="ENSGT00940000161184"/>
<dbReference type="HOGENOM" id="CLU_118853_4_1_1"/>
<dbReference type="InParanoid" id="Q8N6N7"/>
<dbReference type="OMA" id="IACPAML"/>
<dbReference type="OrthoDB" id="346910at2759"/>
<dbReference type="PAN-GO" id="Q8N6N7">
    <property type="GO annotations" value="2 GO annotations based on evolutionary models"/>
</dbReference>
<dbReference type="PhylomeDB" id="Q8N6N7"/>
<dbReference type="TreeFam" id="TF335802"/>
<dbReference type="PathwayCommons" id="Q8N6N7"/>
<dbReference type="Reactome" id="R-HSA-77289">
    <property type="pathway name" value="Mitochondrial Fatty Acid Beta-Oxidation"/>
</dbReference>
<dbReference type="SignaLink" id="Q8N6N7"/>
<dbReference type="BioGRID-ORCS" id="414149">
    <property type="hits" value="18 hits in 1141 CRISPR screens"/>
</dbReference>
<dbReference type="EvolutionaryTrace" id="Q8N6N7"/>
<dbReference type="GenomeRNAi" id="414149"/>
<dbReference type="Pharos" id="Q8N6N7">
    <property type="development level" value="Tdark"/>
</dbReference>
<dbReference type="PRO" id="PR:Q8N6N7"/>
<dbReference type="Proteomes" id="UP000005640">
    <property type="component" value="Chromosome 10"/>
</dbReference>
<dbReference type="RNAct" id="Q8N6N7">
    <property type="molecule type" value="protein"/>
</dbReference>
<dbReference type="Bgee" id="ENSG00000176244">
    <property type="expression patterns" value="Expressed in caudate nucleus and 100 other cell types or tissues"/>
</dbReference>
<dbReference type="GO" id="GO:0000062">
    <property type="term" value="F:fatty-acyl-CoA binding"/>
    <property type="evidence" value="ECO:0000318"/>
    <property type="project" value="GO_Central"/>
</dbReference>
<dbReference type="GO" id="GO:0006631">
    <property type="term" value="P:fatty acid metabolic process"/>
    <property type="evidence" value="ECO:0000318"/>
    <property type="project" value="GO_Central"/>
</dbReference>
<dbReference type="Gene3D" id="1.20.80.10">
    <property type="match status" value="1"/>
</dbReference>
<dbReference type="InterPro" id="IPR000582">
    <property type="entry name" value="Acyl-CoA-binding_protein"/>
</dbReference>
<dbReference type="InterPro" id="IPR035984">
    <property type="entry name" value="Acyl-CoA-binding_sf"/>
</dbReference>
<dbReference type="InterPro" id="IPR014352">
    <property type="entry name" value="FERM/acyl-CoA-bd_prot_sf"/>
</dbReference>
<dbReference type="PANTHER" id="PTHR23310:SF51">
    <property type="entry name" value="ACYL-COA-BINDING DOMAIN-CONTAINING PROTEIN 7"/>
    <property type="match status" value="1"/>
</dbReference>
<dbReference type="PANTHER" id="PTHR23310">
    <property type="entry name" value="ACYL-COA-BINDING PROTEIN, ACBP"/>
    <property type="match status" value="1"/>
</dbReference>
<dbReference type="Pfam" id="PF00887">
    <property type="entry name" value="ACBP"/>
    <property type="match status" value="1"/>
</dbReference>
<dbReference type="PRINTS" id="PR00689">
    <property type="entry name" value="ACOABINDINGP"/>
</dbReference>
<dbReference type="SUPFAM" id="SSF47027">
    <property type="entry name" value="Acyl-CoA binding protein"/>
    <property type="match status" value="1"/>
</dbReference>
<dbReference type="PROSITE" id="PS51228">
    <property type="entry name" value="ACB_2"/>
    <property type="match status" value="1"/>
</dbReference>
<evidence type="ECO:0000255" key="1">
    <source>
        <dbReference type="PROSITE-ProRule" id="PRU00573"/>
    </source>
</evidence>
<evidence type="ECO:0000305" key="2"/>
<evidence type="ECO:0007829" key="3">
    <source>
        <dbReference type="PDB" id="3EPY"/>
    </source>
</evidence>
<protein>
    <recommendedName>
        <fullName>Acyl-CoA-binding domain-containing protein 7</fullName>
    </recommendedName>
</protein>
<reference key="1">
    <citation type="journal article" date="2004" name="Nat. Genet.">
        <title>Complete sequencing and characterization of 21,243 full-length human cDNAs.</title>
        <authorList>
            <person name="Ota T."/>
            <person name="Suzuki Y."/>
            <person name="Nishikawa T."/>
            <person name="Otsuki T."/>
            <person name="Sugiyama T."/>
            <person name="Irie R."/>
            <person name="Wakamatsu A."/>
            <person name="Hayashi K."/>
            <person name="Sato H."/>
            <person name="Nagai K."/>
            <person name="Kimura K."/>
            <person name="Makita H."/>
            <person name="Sekine M."/>
            <person name="Obayashi M."/>
            <person name="Nishi T."/>
            <person name="Shibahara T."/>
            <person name="Tanaka T."/>
            <person name="Ishii S."/>
            <person name="Yamamoto J."/>
            <person name="Saito K."/>
            <person name="Kawai Y."/>
            <person name="Isono Y."/>
            <person name="Nakamura Y."/>
            <person name="Nagahari K."/>
            <person name="Murakami K."/>
            <person name="Yasuda T."/>
            <person name="Iwayanagi T."/>
            <person name="Wagatsuma M."/>
            <person name="Shiratori A."/>
            <person name="Sudo H."/>
            <person name="Hosoiri T."/>
            <person name="Kaku Y."/>
            <person name="Kodaira H."/>
            <person name="Kondo H."/>
            <person name="Sugawara M."/>
            <person name="Takahashi M."/>
            <person name="Kanda K."/>
            <person name="Yokoi T."/>
            <person name="Furuya T."/>
            <person name="Kikkawa E."/>
            <person name="Omura Y."/>
            <person name="Abe K."/>
            <person name="Kamihara K."/>
            <person name="Katsuta N."/>
            <person name="Sato K."/>
            <person name="Tanikawa M."/>
            <person name="Yamazaki M."/>
            <person name="Ninomiya K."/>
            <person name="Ishibashi T."/>
            <person name="Yamashita H."/>
            <person name="Murakawa K."/>
            <person name="Fujimori K."/>
            <person name="Tanai H."/>
            <person name="Kimata M."/>
            <person name="Watanabe M."/>
            <person name="Hiraoka S."/>
            <person name="Chiba Y."/>
            <person name="Ishida S."/>
            <person name="Ono Y."/>
            <person name="Takiguchi S."/>
            <person name="Watanabe S."/>
            <person name="Yosida M."/>
            <person name="Hotuta T."/>
            <person name="Kusano J."/>
            <person name="Kanehori K."/>
            <person name="Takahashi-Fujii A."/>
            <person name="Hara H."/>
            <person name="Tanase T.-O."/>
            <person name="Nomura Y."/>
            <person name="Togiya S."/>
            <person name="Komai F."/>
            <person name="Hara R."/>
            <person name="Takeuchi K."/>
            <person name="Arita M."/>
            <person name="Imose N."/>
            <person name="Musashino K."/>
            <person name="Yuuki H."/>
            <person name="Oshima A."/>
            <person name="Sasaki N."/>
            <person name="Aotsuka S."/>
            <person name="Yoshikawa Y."/>
            <person name="Matsunawa H."/>
            <person name="Ichihara T."/>
            <person name="Shiohata N."/>
            <person name="Sano S."/>
            <person name="Moriya S."/>
            <person name="Momiyama H."/>
            <person name="Satoh N."/>
            <person name="Takami S."/>
            <person name="Terashima Y."/>
            <person name="Suzuki O."/>
            <person name="Nakagawa S."/>
            <person name="Senoh A."/>
            <person name="Mizoguchi H."/>
            <person name="Goto Y."/>
            <person name="Shimizu F."/>
            <person name="Wakebe H."/>
            <person name="Hishigaki H."/>
            <person name="Watanabe T."/>
            <person name="Sugiyama A."/>
            <person name="Takemoto M."/>
            <person name="Kawakami B."/>
            <person name="Yamazaki M."/>
            <person name="Watanabe K."/>
            <person name="Kumagai A."/>
            <person name="Itakura S."/>
            <person name="Fukuzumi Y."/>
            <person name="Fujimori Y."/>
            <person name="Komiyama M."/>
            <person name="Tashiro H."/>
            <person name="Tanigami A."/>
            <person name="Fujiwara T."/>
            <person name="Ono T."/>
            <person name="Yamada K."/>
            <person name="Fujii Y."/>
            <person name="Ozaki K."/>
            <person name="Hirao M."/>
            <person name="Ohmori Y."/>
            <person name="Kawabata A."/>
            <person name="Hikiji T."/>
            <person name="Kobatake N."/>
            <person name="Inagaki H."/>
            <person name="Ikema Y."/>
            <person name="Okamoto S."/>
            <person name="Okitani R."/>
            <person name="Kawakami T."/>
            <person name="Noguchi S."/>
            <person name="Itoh T."/>
            <person name="Shigeta K."/>
            <person name="Senba T."/>
            <person name="Matsumura K."/>
            <person name="Nakajima Y."/>
            <person name="Mizuno T."/>
            <person name="Morinaga M."/>
            <person name="Sasaki M."/>
            <person name="Togashi T."/>
            <person name="Oyama M."/>
            <person name="Hata H."/>
            <person name="Watanabe M."/>
            <person name="Komatsu T."/>
            <person name="Mizushima-Sugano J."/>
            <person name="Satoh T."/>
            <person name="Shirai Y."/>
            <person name="Takahashi Y."/>
            <person name="Nakagawa K."/>
            <person name="Okumura K."/>
            <person name="Nagase T."/>
            <person name="Nomura N."/>
            <person name="Kikuchi H."/>
            <person name="Masuho Y."/>
            <person name="Yamashita R."/>
            <person name="Nakai K."/>
            <person name="Yada T."/>
            <person name="Nakamura Y."/>
            <person name="Ohara O."/>
            <person name="Isogai T."/>
            <person name="Sugano S."/>
        </authorList>
    </citation>
    <scope>NUCLEOTIDE SEQUENCE [LARGE SCALE MRNA]</scope>
    <source>
        <tissue>Brain</tissue>
    </source>
</reference>
<reference key="2">
    <citation type="journal article" date="2004" name="Nature">
        <title>The DNA sequence and comparative analysis of human chromosome 10.</title>
        <authorList>
            <person name="Deloukas P."/>
            <person name="Earthrowl M.E."/>
            <person name="Grafham D.V."/>
            <person name="Rubenfield M."/>
            <person name="French L."/>
            <person name="Steward C.A."/>
            <person name="Sims S.K."/>
            <person name="Jones M.C."/>
            <person name="Searle S."/>
            <person name="Scott C."/>
            <person name="Howe K."/>
            <person name="Hunt S.E."/>
            <person name="Andrews T.D."/>
            <person name="Gilbert J.G.R."/>
            <person name="Swarbreck D."/>
            <person name="Ashurst J.L."/>
            <person name="Taylor A."/>
            <person name="Battles J."/>
            <person name="Bird C.P."/>
            <person name="Ainscough R."/>
            <person name="Almeida J.P."/>
            <person name="Ashwell R.I.S."/>
            <person name="Ambrose K.D."/>
            <person name="Babbage A.K."/>
            <person name="Bagguley C.L."/>
            <person name="Bailey J."/>
            <person name="Banerjee R."/>
            <person name="Bates K."/>
            <person name="Beasley H."/>
            <person name="Bray-Allen S."/>
            <person name="Brown A.J."/>
            <person name="Brown J.Y."/>
            <person name="Burford D.C."/>
            <person name="Burrill W."/>
            <person name="Burton J."/>
            <person name="Cahill P."/>
            <person name="Camire D."/>
            <person name="Carter N.P."/>
            <person name="Chapman J.C."/>
            <person name="Clark S.Y."/>
            <person name="Clarke G."/>
            <person name="Clee C.M."/>
            <person name="Clegg S."/>
            <person name="Corby N."/>
            <person name="Coulson A."/>
            <person name="Dhami P."/>
            <person name="Dutta I."/>
            <person name="Dunn M."/>
            <person name="Faulkner L."/>
            <person name="Frankish A."/>
            <person name="Frankland J.A."/>
            <person name="Garner P."/>
            <person name="Garnett J."/>
            <person name="Gribble S."/>
            <person name="Griffiths C."/>
            <person name="Grocock R."/>
            <person name="Gustafson E."/>
            <person name="Hammond S."/>
            <person name="Harley J.L."/>
            <person name="Hart E."/>
            <person name="Heath P.D."/>
            <person name="Ho T.P."/>
            <person name="Hopkins B."/>
            <person name="Horne J."/>
            <person name="Howden P.J."/>
            <person name="Huckle E."/>
            <person name="Hynds C."/>
            <person name="Johnson C."/>
            <person name="Johnson D."/>
            <person name="Kana A."/>
            <person name="Kay M."/>
            <person name="Kimberley A.M."/>
            <person name="Kershaw J.K."/>
            <person name="Kokkinaki M."/>
            <person name="Laird G.K."/>
            <person name="Lawlor S."/>
            <person name="Lee H.M."/>
            <person name="Leongamornlert D.A."/>
            <person name="Laird G."/>
            <person name="Lloyd C."/>
            <person name="Lloyd D.M."/>
            <person name="Loveland J."/>
            <person name="Lovell J."/>
            <person name="McLaren S."/>
            <person name="McLay K.E."/>
            <person name="McMurray A."/>
            <person name="Mashreghi-Mohammadi M."/>
            <person name="Matthews L."/>
            <person name="Milne S."/>
            <person name="Nickerson T."/>
            <person name="Nguyen M."/>
            <person name="Overton-Larty E."/>
            <person name="Palmer S.A."/>
            <person name="Pearce A.V."/>
            <person name="Peck A.I."/>
            <person name="Pelan S."/>
            <person name="Phillimore B."/>
            <person name="Porter K."/>
            <person name="Rice C.M."/>
            <person name="Rogosin A."/>
            <person name="Ross M.T."/>
            <person name="Sarafidou T."/>
            <person name="Sehra H.K."/>
            <person name="Shownkeen R."/>
            <person name="Skuce C.D."/>
            <person name="Smith M."/>
            <person name="Standring L."/>
            <person name="Sycamore N."/>
            <person name="Tester J."/>
            <person name="Thorpe A."/>
            <person name="Torcasso W."/>
            <person name="Tracey A."/>
            <person name="Tromans A."/>
            <person name="Tsolas J."/>
            <person name="Wall M."/>
            <person name="Walsh J."/>
            <person name="Wang H."/>
            <person name="Weinstock K."/>
            <person name="West A.P."/>
            <person name="Willey D.L."/>
            <person name="Whitehead S.L."/>
            <person name="Wilming L."/>
            <person name="Wray P.W."/>
            <person name="Young L."/>
            <person name="Chen Y."/>
            <person name="Lovering R.C."/>
            <person name="Moschonas N.K."/>
            <person name="Siebert R."/>
            <person name="Fechtel K."/>
            <person name="Bentley D."/>
            <person name="Durbin R.M."/>
            <person name="Hubbard T."/>
            <person name="Doucette-Stamm L."/>
            <person name="Beck S."/>
            <person name="Smith D.R."/>
            <person name="Rogers J."/>
        </authorList>
    </citation>
    <scope>NUCLEOTIDE SEQUENCE [LARGE SCALE GENOMIC DNA]</scope>
</reference>
<reference key="3">
    <citation type="submission" date="2005-09" db="EMBL/GenBank/DDBJ databases">
        <authorList>
            <person name="Mural R.J."/>
            <person name="Istrail S."/>
            <person name="Sutton G.G."/>
            <person name="Florea L."/>
            <person name="Halpern A.L."/>
            <person name="Mobarry C.M."/>
            <person name="Lippert R."/>
            <person name="Walenz B."/>
            <person name="Shatkay H."/>
            <person name="Dew I."/>
            <person name="Miller J.R."/>
            <person name="Flanigan M.J."/>
            <person name="Edwards N.J."/>
            <person name="Bolanos R."/>
            <person name="Fasulo D."/>
            <person name="Halldorsson B.V."/>
            <person name="Hannenhalli S."/>
            <person name="Turner R."/>
            <person name="Yooseph S."/>
            <person name="Lu F."/>
            <person name="Nusskern D.R."/>
            <person name="Shue B.C."/>
            <person name="Zheng X.H."/>
            <person name="Zhong F."/>
            <person name="Delcher A.L."/>
            <person name="Huson D.H."/>
            <person name="Kravitz S.A."/>
            <person name="Mouchard L."/>
            <person name="Reinert K."/>
            <person name="Remington K.A."/>
            <person name="Clark A.G."/>
            <person name="Waterman M.S."/>
            <person name="Eichler E.E."/>
            <person name="Adams M.D."/>
            <person name="Hunkapiller M.W."/>
            <person name="Myers E.W."/>
            <person name="Venter J.C."/>
        </authorList>
    </citation>
    <scope>NUCLEOTIDE SEQUENCE [LARGE SCALE GENOMIC DNA]</scope>
</reference>
<reference key="4">
    <citation type="journal article" date="2004" name="Genome Res.">
        <title>The status, quality, and expansion of the NIH full-length cDNA project: the Mammalian Gene Collection (MGC).</title>
        <authorList>
            <consortium name="The MGC Project Team"/>
        </authorList>
    </citation>
    <scope>NUCLEOTIDE SEQUENCE [LARGE SCALE MRNA]</scope>
    <source>
        <tissue>Brain</tissue>
    </source>
</reference>
<reference key="5">
    <citation type="submission" date="2009-01" db="PDB data bank">
        <title>Crystal structure of human acyl-COA binding domain 7 complexed with palmitoyl-COA.</title>
        <authorList>
            <consortium name="Structural genomics consortium (SGC)"/>
        </authorList>
    </citation>
    <scope>X-RAY CRYSTALLOGRAPHY (2.0 ANGSTROMS)</scope>
</reference>